<comment type="function">
    <text evidence="1">May play a role in photosystem I and II biogenesis.</text>
</comment>
<comment type="subcellular location">
    <subcellularLocation>
        <location evidence="1">Plastid</location>
        <location evidence="1">Chloroplast thylakoid membrane</location>
        <topology evidence="1">Single-pass membrane protein</topology>
    </subcellularLocation>
</comment>
<comment type="similarity">
    <text evidence="1">Belongs to the PsbN family.</text>
</comment>
<comment type="caution">
    <text evidence="1">Originally thought to be a component of PSII; based on experiments in Synechocystis, N.tabacum and barley, and its absence from PSII in T.elongatus and T.vulcanus, this is probably not true.</text>
</comment>
<reference key="1">
    <citation type="journal article" date="2000" name="Am. J. Bot.">
        <title>Utility of 17 chloroplast genes for inferring the phylogeny of the basal angiosperms.</title>
        <authorList>
            <person name="Graham S.W."/>
            <person name="Olmstead R.G."/>
        </authorList>
    </citation>
    <scope>NUCLEOTIDE SEQUENCE [GENOMIC DNA]</scope>
</reference>
<organism>
    <name type="scientific">Lactoris fernandeziana</name>
    <dbReference type="NCBI Taxonomy" id="22303"/>
    <lineage>
        <taxon>Eukaryota</taxon>
        <taxon>Viridiplantae</taxon>
        <taxon>Streptophyta</taxon>
        <taxon>Embryophyta</taxon>
        <taxon>Tracheophyta</taxon>
        <taxon>Spermatophyta</taxon>
        <taxon>Magnoliopsida</taxon>
        <taxon>Magnoliidae</taxon>
        <taxon>Piperales</taxon>
        <taxon>Lactoridaceae</taxon>
        <taxon>Lactoris</taxon>
    </lineage>
</organism>
<evidence type="ECO:0000255" key="1">
    <source>
        <dbReference type="HAMAP-Rule" id="MF_00293"/>
    </source>
</evidence>
<gene>
    <name evidence="1" type="primary">psbN</name>
</gene>
<name>PSBN_LACFR</name>
<dbReference type="EMBL" id="AF123854">
    <property type="protein sequence ID" value="AAG26295.1"/>
    <property type="molecule type" value="Genomic_DNA"/>
</dbReference>
<dbReference type="RefSeq" id="YP_010447662.1">
    <property type="nucleotide sequence ID" value="NC_065383.1"/>
</dbReference>
<dbReference type="GeneID" id="73954373"/>
<dbReference type="GO" id="GO:0009535">
    <property type="term" value="C:chloroplast thylakoid membrane"/>
    <property type="evidence" value="ECO:0007669"/>
    <property type="project" value="UniProtKB-SubCell"/>
</dbReference>
<dbReference type="GO" id="GO:0015979">
    <property type="term" value="P:photosynthesis"/>
    <property type="evidence" value="ECO:0007669"/>
    <property type="project" value="InterPro"/>
</dbReference>
<dbReference type="HAMAP" id="MF_00293">
    <property type="entry name" value="PSII_PsbN"/>
    <property type="match status" value="1"/>
</dbReference>
<dbReference type="InterPro" id="IPR003398">
    <property type="entry name" value="PSII_PsbN"/>
</dbReference>
<dbReference type="PANTHER" id="PTHR35326">
    <property type="entry name" value="PROTEIN PSBN"/>
    <property type="match status" value="1"/>
</dbReference>
<dbReference type="PANTHER" id="PTHR35326:SF3">
    <property type="entry name" value="PROTEIN PSBN"/>
    <property type="match status" value="1"/>
</dbReference>
<dbReference type="Pfam" id="PF02468">
    <property type="entry name" value="PsbN"/>
    <property type="match status" value="1"/>
</dbReference>
<sequence length="43" mass="4620">METATLVAISISGSLVSFTGYALYTAFGQPAQQLRDPFEEHGD</sequence>
<accession>Q9GF77</accession>
<protein>
    <recommendedName>
        <fullName evidence="1">Protein PsbN</fullName>
    </recommendedName>
</protein>
<keyword id="KW-0150">Chloroplast</keyword>
<keyword id="KW-0472">Membrane</keyword>
<keyword id="KW-0934">Plastid</keyword>
<keyword id="KW-0793">Thylakoid</keyword>
<keyword id="KW-0812">Transmembrane</keyword>
<keyword id="KW-1133">Transmembrane helix</keyword>
<proteinExistence type="inferred from homology"/>
<geneLocation type="chloroplast"/>
<feature type="chain" id="PRO_0000207913" description="Protein PsbN">
    <location>
        <begin position="1"/>
        <end position="43"/>
    </location>
</feature>
<feature type="transmembrane region" description="Helical" evidence="1">
    <location>
        <begin position="5"/>
        <end position="27"/>
    </location>
</feature>